<proteinExistence type="inferred from homology"/>
<feature type="chain" id="PRO_0000062802" description="DNA-binding protein RdgB">
    <location>
        <begin position="1"/>
        <end position="117"/>
    </location>
</feature>
<feature type="DNA-binding region" description="H-T-H motif" evidence="1">
    <location>
        <begin position="82"/>
        <end position="102"/>
    </location>
</feature>
<accession>Q47588</accession>
<protein>
    <recommendedName>
        <fullName>DNA-binding protein RdgB</fullName>
    </recommendedName>
</protein>
<keyword id="KW-0238">DNA-binding</keyword>
<name>RDGB_PECCC</name>
<gene>
    <name type="primary">rdgB</name>
</gene>
<comment type="function">
    <text>Regulates pectin lyase production in response to DNA damage.</text>
</comment>
<comment type="similarity">
    <text evidence="2">Belongs to the c/mor transcriptional regulatory family.</text>
</comment>
<evidence type="ECO:0000250" key="1"/>
<evidence type="ECO:0000305" key="2"/>
<reference key="1">
    <citation type="journal article" date="1994" name="Mol. Microbiol.">
        <title>Nucleotide sequence, organization and expression of rdgA and rdgB genes that regulate pectin lyase production in the plant pathogenic bacterium Erwinia carotovora subsp. carotovora in response to DNA-damaging agents.</title>
        <authorList>
            <person name="Liu Y."/>
            <person name="Chatterjee A."/>
            <person name="Chatterjee A.K."/>
        </authorList>
    </citation>
    <scope>NUCLEOTIDE SEQUENCE [GENOMIC DNA]</scope>
    <source>
        <strain>71</strain>
    </source>
</reference>
<organism>
    <name type="scientific">Pectobacterium carotovorum subsp. carotovorum</name>
    <name type="common">Erwinia carotovora subsp. carotovora</name>
    <dbReference type="NCBI Taxonomy" id="555"/>
    <lineage>
        <taxon>Bacteria</taxon>
        <taxon>Pseudomonadati</taxon>
        <taxon>Pseudomonadota</taxon>
        <taxon>Gammaproteobacteria</taxon>
        <taxon>Enterobacterales</taxon>
        <taxon>Pectobacteriaceae</taxon>
        <taxon>Pectobacterium</taxon>
    </lineage>
</organism>
<sequence length="117" mass="13552">MTEPQFRSKGPELLVELSQHVADTVKTVTELDPQTAELVGNARFAKHMMTVWGGQNVYFPMGISWRASQRDLQIYEEFDGRNHSALAKKYNVSLQWIYKIVRTMRKEELLAKQHTQA</sequence>
<dbReference type="EMBL" id="L32173">
    <property type="protein sequence ID" value="AAA24866.1"/>
    <property type="molecule type" value="Genomic_DNA"/>
</dbReference>
<dbReference type="PIR" id="S61399">
    <property type="entry name" value="S61399"/>
</dbReference>
<dbReference type="SMR" id="Q47588"/>
<dbReference type="GO" id="GO:0003677">
    <property type="term" value="F:DNA binding"/>
    <property type="evidence" value="ECO:0007669"/>
    <property type="project" value="UniProtKB-KW"/>
</dbReference>
<dbReference type="Gene3D" id="1.10.10.60">
    <property type="entry name" value="Homeodomain-like"/>
    <property type="match status" value="1"/>
</dbReference>
<dbReference type="InterPro" id="IPR052411">
    <property type="entry name" value="c-mor_Regulatory_Protein"/>
</dbReference>
<dbReference type="InterPro" id="IPR009057">
    <property type="entry name" value="Homeodomain-like_sf"/>
</dbReference>
<dbReference type="InterPro" id="IPR014875">
    <property type="entry name" value="Mor_transcription_activator"/>
</dbReference>
<dbReference type="PANTHER" id="PTHR37812">
    <property type="entry name" value="MU-LIKE PROPHAGE FLUMU PROTEIN C"/>
    <property type="match status" value="1"/>
</dbReference>
<dbReference type="PANTHER" id="PTHR37812:SF1">
    <property type="entry name" value="MU-LIKE PROPHAGE FLUMU PROTEIN C"/>
    <property type="match status" value="1"/>
</dbReference>
<dbReference type="Pfam" id="PF08765">
    <property type="entry name" value="Mor"/>
    <property type="match status" value="1"/>
</dbReference>
<dbReference type="SUPFAM" id="SSF46689">
    <property type="entry name" value="Homeodomain-like"/>
    <property type="match status" value="1"/>
</dbReference>